<accession>Q8NEX6</accession>
<accession>E1P624</accession>
<accession>Q5TGZ6</accession>
<protein>
    <recommendedName>
        <fullName>Protein WFDC11</fullName>
    </recommendedName>
</protein>
<comment type="subcellular location">
    <subcellularLocation>
        <location evidence="2">Secreted</location>
    </subcellularLocation>
</comment>
<comment type="miscellaneous">
    <text>Although this protein was isolated in a region containing several WAP proteins and was defined as a WAP protein, it does not contain a classical WAP domain.</text>
</comment>
<name>WFD11_HUMAN</name>
<proteinExistence type="inferred from homology"/>
<reference key="1">
    <citation type="journal article" date="2002" name="Biochem. J.">
        <title>A locus on human chromosome 20 contains several genes expressing protease inhibitor domains with homology to whey acidic protein.</title>
        <authorList>
            <person name="Clauss A."/>
            <person name="Lilja H."/>
            <person name="Lundwall A."/>
        </authorList>
    </citation>
    <scope>NUCLEOTIDE SEQUENCE [MRNA]</scope>
</reference>
<reference key="2">
    <citation type="journal article" date="2001" name="Nature">
        <title>The DNA sequence and comparative analysis of human chromosome 20.</title>
        <authorList>
            <person name="Deloukas P."/>
            <person name="Matthews L.H."/>
            <person name="Ashurst J.L."/>
            <person name="Burton J."/>
            <person name="Gilbert J.G.R."/>
            <person name="Jones M."/>
            <person name="Stavrides G."/>
            <person name="Almeida J.P."/>
            <person name="Babbage A.K."/>
            <person name="Bagguley C.L."/>
            <person name="Bailey J."/>
            <person name="Barlow K.F."/>
            <person name="Bates K.N."/>
            <person name="Beard L.M."/>
            <person name="Beare D.M."/>
            <person name="Beasley O.P."/>
            <person name="Bird C.P."/>
            <person name="Blakey S.E."/>
            <person name="Bridgeman A.M."/>
            <person name="Brown A.J."/>
            <person name="Buck D."/>
            <person name="Burrill W.D."/>
            <person name="Butler A.P."/>
            <person name="Carder C."/>
            <person name="Carter N.P."/>
            <person name="Chapman J.C."/>
            <person name="Clamp M."/>
            <person name="Clark G."/>
            <person name="Clark L.N."/>
            <person name="Clark S.Y."/>
            <person name="Clee C.M."/>
            <person name="Clegg S."/>
            <person name="Cobley V.E."/>
            <person name="Collier R.E."/>
            <person name="Connor R.E."/>
            <person name="Corby N.R."/>
            <person name="Coulson A."/>
            <person name="Coville G.J."/>
            <person name="Deadman R."/>
            <person name="Dhami P.D."/>
            <person name="Dunn M."/>
            <person name="Ellington A.G."/>
            <person name="Frankland J.A."/>
            <person name="Fraser A."/>
            <person name="French L."/>
            <person name="Garner P."/>
            <person name="Grafham D.V."/>
            <person name="Griffiths C."/>
            <person name="Griffiths M.N.D."/>
            <person name="Gwilliam R."/>
            <person name="Hall R.E."/>
            <person name="Hammond S."/>
            <person name="Harley J.L."/>
            <person name="Heath P.D."/>
            <person name="Ho S."/>
            <person name="Holden J.L."/>
            <person name="Howden P.J."/>
            <person name="Huckle E."/>
            <person name="Hunt A.R."/>
            <person name="Hunt S.E."/>
            <person name="Jekosch K."/>
            <person name="Johnson C.M."/>
            <person name="Johnson D."/>
            <person name="Kay M.P."/>
            <person name="Kimberley A.M."/>
            <person name="King A."/>
            <person name="Knights A."/>
            <person name="Laird G.K."/>
            <person name="Lawlor S."/>
            <person name="Lehvaeslaiho M.H."/>
            <person name="Leversha M.A."/>
            <person name="Lloyd C."/>
            <person name="Lloyd D.M."/>
            <person name="Lovell J.D."/>
            <person name="Marsh V.L."/>
            <person name="Martin S.L."/>
            <person name="McConnachie L.J."/>
            <person name="McLay K."/>
            <person name="McMurray A.A."/>
            <person name="Milne S.A."/>
            <person name="Mistry D."/>
            <person name="Moore M.J.F."/>
            <person name="Mullikin J.C."/>
            <person name="Nickerson T."/>
            <person name="Oliver K."/>
            <person name="Parker A."/>
            <person name="Patel R."/>
            <person name="Pearce T.A.V."/>
            <person name="Peck A.I."/>
            <person name="Phillimore B.J.C.T."/>
            <person name="Prathalingam S.R."/>
            <person name="Plumb R.W."/>
            <person name="Ramsay H."/>
            <person name="Rice C.M."/>
            <person name="Ross M.T."/>
            <person name="Scott C.E."/>
            <person name="Sehra H.K."/>
            <person name="Shownkeen R."/>
            <person name="Sims S."/>
            <person name="Skuce C.D."/>
            <person name="Smith M.L."/>
            <person name="Soderlund C."/>
            <person name="Steward C.A."/>
            <person name="Sulston J.E."/>
            <person name="Swann R.M."/>
            <person name="Sycamore N."/>
            <person name="Taylor R."/>
            <person name="Tee L."/>
            <person name="Thomas D.W."/>
            <person name="Thorpe A."/>
            <person name="Tracey A."/>
            <person name="Tromans A.C."/>
            <person name="Vaudin M."/>
            <person name="Wall M."/>
            <person name="Wallis J.M."/>
            <person name="Whitehead S.L."/>
            <person name="Whittaker P."/>
            <person name="Willey D.L."/>
            <person name="Williams L."/>
            <person name="Williams S.A."/>
            <person name="Wilming L."/>
            <person name="Wray P.W."/>
            <person name="Hubbard T."/>
            <person name="Durbin R.M."/>
            <person name="Bentley D.R."/>
            <person name="Beck S."/>
            <person name="Rogers J."/>
        </authorList>
    </citation>
    <scope>NUCLEOTIDE SEQUENCE [LARGE SCALE GENOMIC DNA]</scope>
</reference>
<reference key="3">
    <citation type="submission" date="2005-09" db="EMBL/GenBank/DDBJ databases">
        <authorList>
            <person name="Mural R.J."/>
            <person name="Istrail S."/>
            <person name="Sutton G.G."/>
            <person name="Florea L."/>
            <person name="Halpern A.L."/>
            <person name="Mobarry C.M."/>
            <person name="Lippert R."/>
            <person name="Walenz B."/>
            <person name="Shatkay H."/>
            <person name="Dew I."/>
            <person name="Miller J.R."/>
            <person name="Flanigan M.J."/>
            <person name="Edwards N.J."/>
            <person name="Bolanos R."/>
            <person name="Fasulo D."/>
            <person name="Halldorsson B.V."/>
            <person name="Hannenhalli S."/>
            <person name="Turner R."/>
            <person name="Yooseph S."/>
            <person name="Lu F."/>
            <person name="Nusskern D.R."/>
            <person name="Shue B.C."/>
            <person name="Zheng X.H."/>
            <person name="Zhong F."/>
            <person name="Delcher A.L."/>
            <person name="Huson D.H."/>
            <person name="Kravitz S.A."/>
            <person name="Mouchard L."/>
            <person name="Reinert K."/>
            <person name="Remington K.A."/>
            <person name="Clark A.G."/>
            <person name="Waterman M.S."/>
            <person name="Eichler E.E."/>
            <person name="Adams M.D."/>
            <person name="Hunkapiller M.W."/>
            <person name="Myers E.W."/>
            <person name="Venter J.C."/>
        </authorList>
    </citation>
    <scope>NUCLEOTIDE SEQUENCE [LARGE SCALE GENOMIC DNA]</scope>
</reference>
<reference key="4">
    <citation type="journal article" date="2004" name="Genome Res.">
        <title>The status, quality, and expansion of the NIH full-length cDNA project: the Mammalian Gene Collection (MGC).</title>
        <authorList>
            <consortium name="The MGC Project Team"/>
        </authorList>
    </citation>
    <scope>NUCLEOTIDE SEQUENCE [LARGE SCALE MRNA]</scope>
    <source>
        <tissue>Testis</tissue>
    </source>
</reference>
<evidence type="ECO:0000255" key="1"/>
<evidence type="ECO:0000305" key="2"/>
<dbReference type="EMBL" id="AY047609">
    <property type="protein sequence ID" value="AAK97771.1"/>
    <property type="molecule type" value="mRNA"/>
</dbReference>
<dbReference type="EMBL" id="AL031671">
    <property type="status" value="NOT_ANNOTATED_CDS"/>
    <property type="molecule type" value="Genomic_DNA"/>
</dbReference>
<dbReference type="EMBL" id="CH471077">
    <property type="protein sequence ID" value="EAW75824.1"/>
    <property type="molecule type" value="Genomic_DNA"/>
</dbReference>
<dbReference type="EMBL" id="CH471077">
    <property type="protein sequence ID" value="EAW75825.1"/>
    <property type="molecule type" value="Genomic_DNA"/>
</dbReference>
<dbReference type="EMBL" id="BC062670">
    <property type="protein sequence ID" value="AAH62670.1"/>
    <property type="molecule type" value="mRNA"/>
</dbReference>
<dbReference type="CCDS" id="CCDS13364.1"/>
<dbReference type="RefSeq" id="NP_671730.1">
    <property type="nucleotide sequence ID" value="NM_147197.2"/>
</dbReference>
<dbReference type="RefSeq" id="XP_047296036.1">
    <property type="nucleotide sequence ID" value="XM_047440080.1"/>
</dbReference>
<dbReference type="RefSeq" id="XP_054179286.1">
    <property type="nucleotide sequence ID" value="XM_054323311.1"/>
</dbReference>
<dbReference type="BioGRID" id="129231">
    <property type="interactions" value="21"/>
</dbReference>
<dbReference type="IntAct" id="Q8NEX6">
    <property type="interactions" value="18"/>
</dbReference>
<dbReference type="STRING" id="9606.ENSP00000348968"/>
<dbReference type="iPTMnet" id="Q8NEX6"/>
<dbReference type="PhosphoSitePlus" id="Q8NEX6"/>
<dbReference type="BioMuta" id="WFDC11"/>
<dbReference type="DMDM" id="26401306"/>
<dbReference type="MassIVE" id="Q8NEX6"/>
<dbReference type="PaxDb" id="9606-ENSP00000348968"/>
<dbReference type="PeptideAtlas" id="Q8NEX6"/>
<dbReference type="ProteomicsDB" id="73228"/>
<dbReference type="Antibodypedia" id="70456">
    <property type="antibodies" value="25 antibodies from 5 providers"/>
</dbReference>
<dbReference type="DNASU" id="259239"/>
<dbReference type="Ensembl" id="ENST00000324384.4">
    <property type="protein sequence ID" value="ENSP00000318753.3"/>
    <property type="gene ID" value="ENSG00000180083.11"/>
</dbReference>
<dbReference type="Ensembl" id="ENST00000356562.6">
    <property type="protein sequence ID" value="ENSP00000348968.2"/>
    <property type="gene ID" value="ENSG00000180083.11"/>
</dbReference>
<dbReference type="Ensembl" id="ENST00000618797.4">
    <property type="protein sequence ID" value="ENSP00000479579.1"/>
    <property type="gene ID" value="ENSG00000180083.11"/>
</dbReference>
<dbReference type="GeneID" id="259239"/>
<dbReference type="KEGG" id="hsa:259239"/>
<dbReference type="MANE-Select" id="ENST00000324384.4">
    <property type="protein sequence ID" value="ENSP00000318753.3"/>
    <property type="RefSeq nucleotide sequence ID" value="NM_147197.2"/>
    <property type="RefSeq protein sequence ID" value="NP_671730.1"/>
</dbReference>
<dbReference type="UCSC" id="uc002xpa.4">
    <property type="organism name" value="human"/>
</dbReference>
<dbReference type="AGR" id="HGNC:20478"/>
<dbReference type="CTD" id="259239"/>
<dbReference type="GeneCards" id="WFDC11"/>
<dbReference type="HGNC" id="HGNC:20478">
    <property type="gene designation" value="WFDC11"/>
</dbReference>
<dbReference type="HPA" id="ENSG00000180083">
    <property type="expression patterns" value="Tissue enriched (epididymis)"/>
</dbReference>
<dbReference type="neXtProt" id="NX_Q8NEX6"/>
<dbReference type="OpenTargets" id="ENSG00000180083"/>
<dbReference type="PharmGKB" id="PA134905167"/>
<dbReference type="VEuPathDB" id="HostDB:ENSG00000180083"/>
<dbReference type="eggNOG" id="ENOG502TE8U">
    <property type="taxonomic scope" value="Eukaryota"/>
</dbReference>
<dbReference type="GeneTree" id="ENSGT00940000163115"/>
<dbReference type="HOGENOM" id="CLU_191873_0_0_1"/>
<dbReference type="InParanoid" id="Q8NEX6"/>
<dbReference type="OMA" id="ECWGQPN"/>
<dbReference type="OrthoDB" id="9542712at2759"/>
<dbReference type="PAN-GO" id="Q8NEX6">
    <property type="GO annotations" value="4 GO annotations based on evolutionary models"/>
</dbReference>
<dbReference type="PhylomeDB" id="Q8NEX6"/>
<dbReference type="TreeFam" id="TF338513"/>
<dbReference type="PathwayCommons" id="Q8NEX6"/>
<dbReference type="BioGRID-ORCS" id="259239">
    <property type="hits" value="13 hits in 1069 CRISPR screens"/>
</dbReference>
<dbReference type="ChiTaRS" id="WFDC11">
    <property type="organism name" value="human"/>
</dbReference>
<dbReference type="GenomeRNAi" id="259239"/>
<dbReference type="Pharos" id="Q8NEX6">
    <property type="development level" value="Tdark"/>
</dbReference>
<dbReference type="PRO" id="PR:Q8NEX6"/>
<dbReference type="Proteomes" id="UP000005640">
    <property type="component" value="Chromosome 20"/>
</dbReference>
<dbReference type="RNAct" id="Q8NEX6">
    <property type="molecule type" value="protein"/>
</dbReference>
<dbReference type="Bgee" id="ENSG00000180083">
    <property type="expression patterns" value="Expressed in corpus epididymis and 62 other cell types or tissues"/>
</dbReference>
<dbReference type="GO" id="GO:0005615">
    <property type="term" value="C:extracellular space"/>
    <property type="evidence" value="ECO:0000318"/>
    <property type="project" value="GO_Central"/>
</dbReference>
<dbReference type="GO" id="GO:0004867">
    <property type="term" value="F:serine-type endopeptidase inhibitor activity"/>
    <property type="evidence" value="ECO:0000318"/>
    <property type="project" value="GO_Central"/>
</dbReference>
<dbReference type="GO" id="GO:0019731">
    <property type="term" value="P:antibacterial humoral response"/>
    <property type="evidence" value="ECO:0000318"/>
    <property type="project" value="GO_Central"/>
</dbReference>
<dbReference type="GO" id="GO:0045087">
    <property type="term" value="P:innate immune response"/>
    <property type="evidence" value="ECO:0000318"/>
    <property type="project" value="GO_Central"/>
</dbReference>
<keyword id="KW-1185">Reference proteome</keyword>
<keyword id="KW-0964">Secreted</keyword>
<keyword id="KW-0732">Signal</keyword>
<organism>
    <name type="scientific">Homo sapiens</name>
    <name type="common">Human</name>
    <dbReference type="NCBI Taxonomy" id="9606"/>
    <lineage>
        <taxon>Eukaryota</taxon>
        <taxon>Metazoa</taxon>
        <taxon>Chordata</taxon>
        <taxon>Craniata</taxon>
        <taxon>Vertebrata</taxon>
        <taxon>Euteleostomi</taxon>
        <taxon>Mammalia</taxon>
        <taxon>Eutheria</taxon>
        <taxon>Euarchontoglires</taxon>
        <taxon>Primates</taxon>
        <taxon>Haplorrhini</taxon>
        <taxon>Catarrhini</taxon>
        <taxon>Hominidae</taxon>
        <taxon>Homo</taxon>
    </lineage>
</organism>
<gene>
    <name type="primary">WFDC11</name>
    <name type="synonym">WAP11</name>
</gene>
<sequence>MVSLMKLWIPMLMTFFCTVLLSVLGEMRKKRYDRKELLLEECWGKPNVKECTNKCSKAFRCKDKNYTCCWTYCGNICWINVETSGDY</sequence>
<feature type="signal peptide" evidence="1">
    <location>
        <begin position="1"/>
        <end position="25"/>
    </location>
</feature>
<feature type="chain" id="PRO_0000041389" description="Protein WFDC11">
    <location>
        <begin position="26"/>
        <end position="87"/>
    </location>
</feature>